<accession>P85120</accession>
<name>DAPLE_XENLA</name>
<dbReference type="SMR" id="P85120"/>
<dbReference type="Proteomes" id="UP000186698">
    <property type="component" value="Unplaced"/>
</dbReference>
<dbReference type="GO" id="GO:0070161">
    <property type="term" value="C:anchoring junction"/>
    <property type="evidence" value="ECO:0007669"/>
    <property type="project" value="UniProtKB-SubCell"/>
</dbReference>
<dbReference type="GO" id="GO:0030054">
    <property type="term" value="C:cell junction"/>
    <property type="evidence" value="ECO:0000315"/>
    <property type="project" value="UniProtKB"/>
</dbReference>
<dbReference type="GO" id="GO:0005813">
    <property type="term" value="C:centrosome"/>
    <property type="evidence" value="ECO:0000318"/>
    <property type="project" value="GO_Central"/>
</dbReference>
<dbReference type="GO" id="GO:0005737">
    <property type="term" value="C:cytoplasm"/>
    <property type="evidence" value="ECO:0000250"/>
    <property type="project" value="UniProtKB"/>
</dbReference>
<dbReference type="GO" id="GO:0051959">
    <property type="term" value="F:dynein light intermediate chain binding"/>
    <property type="evidence" value="ECO:0000318"/>
    <property type="project" value="GO_Central"/>
</dbReference>
<dbReference type="GO" id="GO:0001965">
    <property type="term" value="F:G-protein alpha-subunit binding"/>
    <property type="evidence" value="ECO:0000250"/>
    <property type="project" value="UniProtKB"/>
</dbReference>
<dbReference type="GO" id="GO:0005085">
    <property type="term" value="F:guanyl-nucleotide exchange factor activity"/>
    <property type="evidence" value="ECO:0000314"/>
    <property type="project" value="UniProtKB"/>
</dbReference>
<dbReference type="GO" id="GO:0008017">
    <property type="term" value="F:microtubule binding"/>
    <property type="evidence" value="ECO:0000318"/>
    <property type="project" value="GO_Central"/>
</dbReference>
<dbReference type="GO" id="GO:0030165">
    <property type="term" value="F:PDZ domain binding"/>
    <property type="evidence" value="ECO:0000250"/>
    <property type="project" value="UniProtKB"/>
</dbReference>
<dbReference type="GO" id="GO:0003383">
    <property type="term" value="P:apical constriction"/>
    <property type="evidence" value="ECO:0000315"/>
    <property type="project" value="UniProtKB"/>
</dbReference>
<dbReference type="GO" id="GO:0031122">
    <property type="term" value="P:cytoplasmic microtubule organization"/>
    <property type="evidence" value="ECO:0000318"/>
    <property type="project" value="GO_Central"/>
</dbReference>
<dbReference type="GO" id="GO:0030705">
    <property type="term" value="P:cytoskeleton-dependent intracellular transport"/>
    <property type="evidence" value="ECO:0000318"/>
    <property type="project" value="GO_Central"/>
</dbReference>
<dbReference type="GO" id="GO:0009950">
    <property type="term" value="P:dorsal/ventral axis specification"/>
    <property type="evidence" value="ECO:0000315"/>
    <property type="project" value="UniProtKB"/>
</dbReference>
<dbReference type="GO" id="GO:0001736">
    <property type="term" value="P:establishment of planar polarity"/>
    <property type="evidence" value="ECO:0000315"/>
    <property type="project" value="UniProtKB"/>
</dbReference>
<dbReference type="GO" id="GO:0001841">
    <property type="term" value="P:neural tube formation"/>
    <property type="evidence" value="ECO:0000315"/>
    <property type="project" value="UniProtKB"/>
</dbReference>
<dbReference type="GO" id="GO:0090263">
    <property type="term" value="P:positive regulation of canonical Wnt signaling pathway"/>
    <property type="evidence" value="ECO:0000316"/>
    <property type="project" value="UniProtKB"/>
</dbReference>
<dbReference type="GO" id="GO:0046330">
    <property type="term" value="P:positive regulation of JNK cascade"/>
    <property type="evidence" value="ECO:0000315"/>
    <property type="project" value="UniProtKB"/>
</dbReference>
<dbReference type="GO" id="GO:2000096">
    <property type="term" value="P:positive regulation of Wnt signaling pathway, planar cell polarity pathway"/>
    <property type="evidence" value="ECO:0000315"/>
    <property type="project" value="UniProtKB"/>
</dbReference>
<dbReference type="GO" id="GO:0007264">
    <property type="term" value="P:small GTPase-mediated signal transduction"/>
    <property type="evidence" value="ECO:0000314"/>
    <property type="project" value="UniProtKB"/>
</dbReference>
<dbReference type="GO" id="GO:0016055">
    <property type="term" value="P:Wnt signaling pathway"/>
    <property type="evidence" value="ECO:0007669"/>
    <property type="project" value="UniProtKB-KW"/>
</dbReference>
<dbReference type="FunFam" id="1.10.418.10:FF:000035">
    <property type="entry name" value="girdin isoform X1"/>
    <property type="match status" value="1"/>
</dbReference>
<dbReference type="Gene3D" id="1.10.287.1490">
    <property type="match status" value="1"/>
</dbReference>
<dbReference type="Gene3D" id="1.10.418.10">
    <property type="entry name" value="Calponin-like domain"/>
    <property type="match status" value="1"/>
</dbReference>
<dbReference type="InterPro" id="IPR001715">
    <property type="entry name" value="CH_dom"/>
</dbReference>
<dbReference type="InterPro" id="IPR036872">
    <property type="entry name" value="CH_dom_sf"/>
</dbReference>
<dbReference type="InterPro" id="IPR043936">
    <property type="entry name" value="HOOK_N"/>
</dbReference>
<dbReference type="PANTHER" id="PTHR18947">
    <property type="entry name" value="HOOK PROTEINS"/>
    <property type="match status" value="1"/>
</dbReference>
<dbReference type="PANTHER" id="PTHR18947:SF31">
    <property type="entry name" value="PROTEIN DAPLE"/>
    <property type="match status" value="1"/>
</dbReference>
<dbReference type="Pfam" id="PF19047">
    <property type="entry name" value="HOOK_N"/>
    <property type="match status" value="1"/>
</dbReference>
<dbReference type="SUPFAM" id="SSF116907">
    <property type="entry name" value="Hook domain"/>
    <property type="match status" value="1"/>
</dbReference>
<dbReference type="PROSITE" id="PS50021">
    <property type="entry name" value="CH"/>
    <property type="match status" value="1"/>
</dbReference>
<gene>
    <name type="primary">ccdc88c</name>
    <name type="synonym">dal</name>
</gene>
<sequence length="2058" mass="236339">MDTTISQQMDHFLESPLVTWVKTFGPCGNENESKLAMYMELVDGVFLNKIMVQIDPRPSNQRVNKHVNNDVNRRVQNLTILVRHIKAYYQEVLQQLIVMNLPNVLLISKDPLTDKSMEELKKILLLMLGCAVQCERKEEYIERIKQLDIETQAGIVSHIQEVTHNQENVFDLQWLELSDMAPEELDSLSRNMALHLKRLIDERDECKEVIVDLTQERDYLQFQNHPSPVKSSSPDTSANMVSHLSSEDKKHLAVELAESKAKLRRIRQELEEKSELLLDTKHEVERLNLELQKIKQENFQLASEARTARTYRDEIDSLKERASKVDRLENELARCKEKLHDVDFYKARMDELREDNMILIETKSMLEEQLAAARTRTDKLHELEKENLQLKSKIHDLELDRYSDKNRIEELLEENMVLEIAQKQSMNESAQLGWELDQLSKSTDLSDARKSFVFELNETTSSKILKLEKENQSLQNIIQDLREASLTLEEGNLKGQEWEKENQQLSKKIENLNQQIERERQSSLDLESLSEDLLKEKDQLSQALENIKSQKERQIKELEQENKHLIQTLEAVRQRSQVSTEARVKDIEMENRILHETIKDTSSKMNELEYEKKQLQKAFDQSKEQVEKLDKMEKEVHRLEKQNEILTKKVTSIKIVEEKMQGLEKENEVLEGENIVLKKSLDTLQNVTIKLEVLESENKQLDEENLELRRAVEAMRFSCAKSTQIERENNELQKEKEELQKNVELLKALGKKSERLEVSYQGLNDENWRLQQMLDTGNKKINDLEKELHDTEKENKDLQRTLEEMKICNKRLERMEEENKAKEQEMVQLEKDNKILQKESKRLWQQVELKDAILDDNTVKLADLEKENRALEKEISKLRDLSTKTRDLERENKDLLQQMTVDKRTLATLREDLVLEKLKTQQMSSELDKLSLELEKIGLNKESMLQDENSNAEKKYKLLENKIESTLKTTLAVKENKIVALEMKIEETSSLNQQLQNELNSIKKDIIASKENLRGAAHNSYTQLSSKQDCNSQINGQRETTVELLKFKDRTIELERNNAALQAEKKLFREQLQHLESHNLNLSSQMGTLQKQVTFLQEHNTALQTQTANLQVENATATSQVASLKSQISQFQNQLSARESENEILQQQKEHLRVTHESLLQDHEQLGSLYERQSAEYEGMISQHSSLKSQYKSLEQAHRSLEESYSTLIKHKKELEDLDAVLKKEQDVLQQERRKNFVAMEENQKLKTDLERLNFLHGELQTEYSSLHKHTKEVKTSLNNAQMELNRWQARFDELKEQHQTMDISLTKLDNHCELLTRLKSNLEEENHHLLSQIQMLSQQNQMLLEQSMETKEQYHEEQKQYIDKLHDLRRQKEKLEEKIMDQYKFYDPTPKKKSHWSGAKAIAKLIKPKKEPSRESVKSPTDVQSKTMDNAEMAASPSSMRPLRLQQESLDNSSLGSDEKGSPKVLASKVLVEVAQRQHRMSYHGSSSEQTDGPEHLSRSRRMESGSRAFSTSTIHLTAPAHNAKVPHLSRPKGYNSDDNQSDQLHEAESNAGSSRVPWTSSLEVSRSASNSSSPLTLKGRPESVSSEDMIPTKDIATLSRESNLYHPNAVMLGATKNRESPVNRNSLHLYDYPEKKNSSRTPTRPRPGSPGSEMVTLEEFLQESSRQSPPSRRHSLNDSELITLHQFLFEAETLHPSSQSPSPTLHLKDPSQTAVPKSLPSAENCEWRKRADRASRRAASLYIPRDMVTNRDDMLGDLFKKTEDPPDIRSPMSELIFKDAAQMPTSYVSPTVKVTGNTTKPGQYVKPHPRQLDAPLNVTSSLLHQANVYSATSSSQSPEPQALSPHGAMGSRGNSLSRAFSLASADLLKENGPEVVMQEKSDVETPVGKDFGRYMIRSSTPLGSQSSLREKPQSARMQHMLRGDDRQYRSLDSRRLSLALPKEETTPPQPAPSASSLQQHYTLGHGAIRGKPKLLSRSGEVALVSPVRPISSIPELETTQGLASAGPGKSRSTSPDCSPAPVCEEEPNKSETLKSTPASPDPSADPQTVWYEYGCV</sequence>
<organism>
    <name type="scientific">Xenopus laevis</name>
    <name type="common">African clawed frog</name>
    <dbReference type="NCBI Taxonomy" id="8355"/>
    <lineage>
        <taxon>Eukaryota</taxon>
        <taxon>Metazoa</taxon>
        <taxon>Chordata</taxon>
        <taxon>Craniata</taxon>
        <taxon>Vertebrata</taxon>
        <taxon>Euteleostomi</taxon>
        <taxon>Amphibia</taxon>
        <taxon>Batrachia</taxon>
        <taxon>Anura</taxon>
        <taxon>Pipoidea</taxon>
        <taxon>Pipidae</taxon>
        <taxon>Xenopodinae</taxon>
        <taxon>Xenopus</taxon>
        <taxon>Xenopus</taxon>
    </lineage>
</organism>
<protein>
    <recommendedName>
        <fullName evidence="7">Protein Daple</fullName>
        <shortName evidence="7">xDaple</shortName>
    </recommendedName>
    <alternativeName>
        <fullName>Coiled-coil domain-containing protein 88C</fullName>
    </alternativeName>
    <alternativeName>
        <fullName>Dvl-associating protein with a high frequency of leucine residues-like</fullName>
        <shortName>xDal</shortName>
    </alternativeName>
</protein>
<proteinExistence type="evidence at protein level"/>
<comment type="function">
    <text evidence="5 6">Positive regulator of Wnt signaling, acting synergistically with dvl2/dsh (PubMed:16026968). Functions upstream of ctnnb1/beta-catenin in the canonical Wnt pathway, and also activates jnk in the Wnt/planar cell polarity (PCP) pathway (PubMed:16026968). Acts as a non-receptor guanine nucleotide exchange factor which binds to and activates guanine nucleotide-binding protein G(i) alpha subunits (PubMed:30948426). This promotes apical cell constriction and subsequent bending of the neural plate during neurulation via arhgef18 (PubMed:30948426).</text>
</comment>
<comment type="subunit">
    <text evidence="5">Interacts with dvl2/dsh via the PDZ-binding motif.</text>
</comment>
<comment type="subcellular location">
    <subcellularLocation>
        <location evidence="1">Cytoplasm</location>
    </subcellularLocation>
    <subcellularLocation>
        <location evidence="6">Cell junction</location>
    </subcellularLocation>
    <text evidence="6">Enriched at apical cell junctions.</text>
</comment>
<comment type="tissue specificity">
    <text evidence="5">Expressed weakly in gastrulae, with slightly stronger expression in the dorsal region. In neurulae, expressed in the neural plate with strong expression in the presumptive mesencephalic region. At the tailbud stage, expressed in somatic cells and in part of the tail. Also strongly expressed in regions of the head including eye vesicles, otic vesicles, olfactory placode and the pharyngeal cavity.</text>
</comment>
<comment type="developmental stage">
    <text evidence="5">Expressed in all developmental stages, with a gradual increase in expression from the 2-day tadpole stage onward.</text>
</comment>
<comment type="domain">
    <text evidence="6">The GBA (G-alpha binding and activating) motif mediates binding to the alpha subunits of guanine nucleotide-binding proteins (G proteins) (PubMed:30948426). Both motifs are required for binding and activation of alpha subunits (PubMed:30948426).</text>
</comment>
<comment type="domain">
    <text evidence="6">The PDZ domain is required for localization to apical junctions.</text>
</comment>
<comment type="disruption phenotype">
    <text evidence="6">Morpholino knockdown does not affect embryo morphology up to gastrulation but causes a delay in the closure of the neural tube (PubMed:30948426). After the neural tube closes, embryos display mild axis curvature and head defects at later stages and malformations are also evident in the embryonic brain which forms a closed structure but displays an enlargement of the ventricles (PubMed:30948426). Embryos show impaired apical constriction of neuroepithelial cells during neurulation (PubMed:30948426).</text>
</comment>
<comment type="similarity">
    <text evidence="8">Belongs to the CCDC88 family.</text>
</comment>
<evidence type="ECO:0000250" key="1">
    <source>
        <dbReference type="UniProtKB" id="Q9P219"/>
    </source>
</evidence>
<evidence type="ECO:0000255" key="2"/>
<evidence type="ECO:0000255" key="3">
    <source>
        <dbReference type="PROSITE-ProRule" id="PRU00044"/>
    </source>
</evidence>
<evidence type="ECO:0000256" key="4">
    <source>
        <dbReference type="SAM" id="MobiDB-lite"/>
    </source>
</evidence>
<evidence type="ECO:0000269" key="5">
    <source>
    </source>
</evidence>
<evidence type="ECO:0000269" key="6">
    <source>
    </source>
</evidence>
<evidence type="ECO:0000303" key="7">
    <source>
    </source>
</evidence>
<evidence type="ECO:0000305" key="8"/>
<keyword id="KW-0965">Cell junction</keyword>
<keyword id="KW-0175">Coiled coil</keyword>
<keyword id="KW-0963">Cytoplasm</keyword>
<keyword id="KW-0344">Guanine-nucleotide releasing factor</keyword>
<keyword id="KW-1185">Reference proteome</keyword>
<keyword id="KW-0879">Wnt signaling pathway</keyword>
<feature type="chain" id="PRO_0000284727" description="Protein Daple">
    <location>
        <begin position="1"/>
        <end position="2058"/>
    </location>
</feature>
<feature type="domain" description="Calponin-homology (CH)" evidence="3">
    <location>
        <begin position="11"/>
        <end position="131"/>
    </location>
</feature>
<feature type="region of interest" description="Disordered" evidence="4">
    <location>
        <begin position="1406"/>
        <end position="1444"/>
    </location>
</feature>
<feature type="region of interest" description="Disordered" evidence="4">
    <location>
        <begin position="1480"/>
        <end position="1592"/>
    </location>
</feature>
<feature type="region of interest" description="Disordered" evidence="4">
    <location>
        <begin position="1617"/>
        <end position="1655"/>
    </location>
</feature>
<feature type="region of interest" description="Disordered" evidence="4">
    <location>
        <begin position="1696"/>
        <end position="1724"/>
    </location>
</feature>
<feature type="region of interest" description="Disordered" evidence="4">
    <location>
        <begin position="1831"/>
        <end position="1857"/>
    </location>
</feature>
<feature type="region of interest" description="Disordered" evidence="4">
    <location>
        <begin position="1940"/>
        <end position="1959"/>
    </location>
</feature>
<feature type="region of interest" description="Disordered" evidence="4">
    <location>
        <begin position="1988"/>
        <end position="2051"/>
    </location>
</feature>
<feature type="coiled-coil region" evidence="2">
    <location>
        <begin position="195"/>
        <end position="221"/>
    </location>
</feature>
<feature type="coiled-coil region" evidence="2">
    <location>
        <begin position="247"/>
        <end position="428"/>
    </location>
</feature>
<feature type="coiled-coil region" evidence="2">
    <location>
        <begin position="455"/>
        <end position="1016"/>
    </location>
</feature>
<feature type="coiled-coil region" evidence="2">
    <location>
        <begin position="1043"/>
        <end position="1082"/>
    </location>
</feature>
<feature type="coiled-coil region" evidence="2">
    <location>
        <begin position="1108"/>
        <end position="1388"/>
    </location>
</feature>
<feature type="short sequence motif" description="GBA 1" evidence="6">
    <location>
        <begin position="1653"/>
        <end position="1675"/>
    </location>
</feature>
<feature type="short sequence motif" description="GBA 2" evidence="6">
    <location>
        <begin position="1676"/>
        <end position="1697"/>
    </location>
</feature>
<feature type="short sequence motif" description="PDZ-binding" evidence="2">
    <location>
        <begin position="2055"/>
        <end position="2058"/>
    </location>
</feature>
<feature type="compositionally biased region" description="Basic and acidic residues" evidence="4">
    <location>
        <begin position="1409"/>
        <end position="1418"/>
    </location>
</feature>
<feature type="compositionally biased region" description="Polar residues" evidence="4">
    <location>
        <begin position="1419"/>
        <end position="1429"/>
    </location>
</feature>
<feature type="compositionally biased region" description="Basic and acidic residues" evidence="4">
    <location>
        <begin position="1494"/>
        <end position="1506"/>
    </location>
</feature>
<feature type="compositionally biased region" description="Polar residues" evidence="4">
    <location>
        <begin position="1552"/>
        <end position="1577"/>
    </location>
</feature>
<feature type="compositionally biased region" description="Polar residues" evidence="4">
    <location>
        <begin position="1831"/>
        <end position="1841"/>
    </location>
</feature>
<feature type="compositionally biased region" description="Low complexity" evidence="4">
    <location>
        <begin position="2039"/>
        <end position="2048"/>
    </location>
</feature>
<feature type="mutagenesis site" description="Partial reduction in activation of rat Gnai3. Abolishes Gnai3 binding and activation, abolishes promotion of apical cell constriction and fails to rescue morpholino-induced neural plate bending defects but does not affect enrichment at apical cell junctions; when associated with A-1689." evidence="6">
    <original>F</original>
    <variation>A</variation>
    <location>
        <position position="1662"/>
    </location>
</feature>
<feature type="mutagenesis site" description="Partial reduction in activation of rat Gnai3. Abolishes Gnai3 binding and activation, abolishes promotion of apical cell constriction and fails to rescue morpholino-induced neural plate bending defects but does not affect enrichment at apical cell junctions; when associated with A-1662." evidence="6">
    <original>F</original>
    <variation>A</variation>
    <location>
        <position position="1689"/>
    </location>
</feature>
<feature type="mutagenesis site" description="Failure to localize to apical cell junctions and to induce apical cell constriction. Failure to rescue morpholino-induced neural plate bending defects." evidence="6">
    <location>
        <begin position="2055"/>
        <end position="2058"/>
    </location>
</feature>
<reference evidence="8" key="1">
    <citation type="journal article" date="2005" name="Mech. Dev.">
        <title>Novel Daple-like protein positively regulates both the Wnt/beta-catenin pathway and the Wnt/JNK pathway in Xenopus.</title>
        <authorList>
            <person name="Kobayashi H."/>
            <person name="Michiue T."/>
            <person name="Yukita A."/>
            <person name="Danno H."/>
            <person name="Sakurai K."/>
            <person name="Fukui A."/>
            <person name="Kikuchi A."/>
            <person name="Asashima M."/>
        </authorList>
    </citation>
    <scope>NUCLEOTIDE SEQUENCE [MRNA]</scope>
    <scope>FUNCTION</scope>
    <scope>INTERACTION WITH DVL2</scope>
    <scope>TISSUE SPECIFICITY</scope>
    <scope>DEVELOPMENTAL STAGE</scope>
    <source>
        <tissue evidence="5">Embryo</tissue>
    </source>
</reference>
<reference key="2">
    <citation type="journal article" date="2019" name="J. Cell Biol.">
        <title>GPCR-independent activation of G proteins promotes apical cell constriction in vivo.</title>
        <authorList>
            <person name="Marivin A."/>
            <person name="Morozova V."/>
            <person name="Walawalkar I."/>
            <person name="Leyme A."/>
            <person name="Kretov D.A."/>
            <person name="Cifuentes D."/>
            <person name="Dominguez I."/>
            <person name="Garcia-Marcos M."/>
        </authorList>
    </citation>
    <scope>FUNCTION</scope>
    <scope>DISRUPTION PHENOTYPE</scope>
    <scope>GBA MOTIFS</scope>
    <scope>MUTAGENESIS OF PHE-1662; PHE-1689 AND 2055-TYR--VAL-2058</scope>
</reference>